<proteinExistence type="inferred from homology"/>
<protein>
    <recommendedName>
        <fullName evidence="1">Small ribosomal subunit protein uS5</fullName>
    </recommendedName>
    <alternativeName>
        <fullName evidence="2">30S ribosomal protein S5</fullName>
    </alternativeName>
</protein>
<feature type="chain" id="PRO_1000140894" description="Small ribosomal subunit protein uS5">
    <location>
        <begin position="1"/>
        <end position="180"/>
    </location>
</feature>
<feature type="domain" description="S5 DRBM" evidence="1">
    <location>
        <begin position="24"/>
        <end position="87"/>
    </location>
</feature>
<reference key="1">
    <citation type="submission" date="2008-06" db="EMBL/GenBank/DDBJ databases">
        <title>Complete sequence of Stenotrophomonas maltophilia R551-3.</title>
        <authorList>
            <consortium name="US DOE Joint Genome Institute"/>
            <person name="Lucas S."/>
            <person name="Copeland A."/>
            <person name="Lapidus A."/>
            <person name="Glavina del Rio T."/>
            <person name="Dalin E."/>
            <person name="Tice H."/>
            <person name="Pitluck S."/>
            <person name="Chain P."/>
            <person name="Malfatti S."/>
            <person name="Shin M."/>
            <person name="Vergez L."/>
            <person name="Lang D."/>
            <person name="Schmutz J."/>
            <person name="Larimer F."/>
            <person name="Land M."/>
            <person name="Hauser L."/>
            <person name="Kyrpides N."/>
            <person name="Mikhailova N."/>
            <person name="Taghavi S."/>
            <person name="Monchy S."/>
            <person name="Newman L."/>
            <person name="Vangronsveld J."/>
            <person name="van der Lelie D."/>
            <person name="Richardson P."/>
        </authorList>
    </citation>
    <scope>NUCLEOTIDE SEQUENCE [LARGE SCALE GENOMIC DNA]</scope>
    <source>
        <strain>R551-3</strain>
    </source>
</reference>
<comment type="function">
    <text evidence="1">With S4 and S12 plays an important role in translational accuracy.</text>
</comment>
<comment type="function">
    <text evidence="1">Located at the back of the 30S subunit body where it stabilizes the conformation of the head with respect to the body.</text>
</comment>
<comment type="subunit">
    <text evidence="1">Part of the 30S ribosomal subunit. Contacts proteins S4 and S8.</text>
</comment>
<comment type="domain">
    <text>The N-terminal domain interacts with the head of the 30S subunit; the C-terminal domain interacts with the body and contacts protein S4. The interaction surface between S4 and S5 is involved in control of translational fidelity.</text>
</comment>
<comment type="similarity">
    <text evidence="1">Belongs to the universal ribosomal protein uS5 family.</text>
</comment>
<accession>B4SKY0</accession>
<dbReference type="EMBL" id="CP001111">
    <property type="protein sequence ID" value="ACF50478.1"/>
    <property type="molecule type" value="Genomic_DNA"/>
</dbReference>
<dbReference type="RefSeq" id="WP_004145411.1">
    <property type="nucleotide sequence ID" value="NC_011071.1"/>
</dbReference>
<dbReference type="SMR" id="B4SKY0"/>
<dbReference type="STRING" id="391008.Smal_0773"/>
<dbReference type="KEGG" id="smt:Smal_0773"/>
<dbReference type="eggNOG" id="COG0098">
    <property type="taxonomic scope" value="Bacteria"/>
</dbReference>
<dbReference type="HOGENOM" id="CLU_065898_2_2_6"/>
<dbReference type="OrthoDB" id="9809045at2"/>
<dbReference type="Proteomes" id="UP000001867">
    <property type="component" value="Chromosome"/>
</dbReference>
<dbReference type="GO" id="GO:0015935">
    <property type="term" value="C:small ribosomal subunit"/>
    <property type="evidence" value="ECO:0007669"/>
    <property type="project" value="InterPro"/>
</dbReference>
<dbReference type="GO" id="GO:0019843">
    <property type="term" value="F:rRNA binding"/>
    <property type="evidence" value="ECO:0007669"/>
    <property type="project" value="UniProtKB-UniRule"/>
</dbReference>
<dbReference type="GO" id="GO:0003735">
    <property type="term" value="F:structural constituent of ribosome"/>
    <property type="evidence" value="ECO:0007669"/>
    <property type="project" value="InterPro"/>
</dbReference>
<dbReference type="GO" id="GO:0006412">
    <property type="term" value="P:translation"/>
    <property type="evidence" value="ECO:0007669"/>
    <property type="project" value="UniProtKB-UniRule"/>
</dbReference>
<dbReference type="FunFam" id="3.30.160.20:FF:000001">
    <property type="entry name" value="30S ribosomal protein S5"/>
    <property type="match status" value="1"/>
</dbReference>
<dbReference type="FunFam" id="3.30.230.10:FF:000002">
    <property type="entry name" value="30S ribosomal protein S5"/>
    <property type="match status" value="1"/>
</dbReference>
<dbReference type="Gene3D" id="3.30.160.20">
    <property type="match status" value="1"/>
</dbReference>
<dbReference type="Gene3D" id="3.30.230.10">
    <property type="match status" value="1"/>
</dbReference>
<dbReference type="HAMAP" id="MF_01307_B">
    <property type="entry name" value="Ribosomal_uS5_B"/>
    <property type="match status" value="1"/>
</dbReference>
<dbReference type="InterPro" id="IPR020568">
    <property type="entry name" value="Ribosomal_Su5_D2-typ_SF"/>
</dbReference>
<dbReference type="InterPro" id="IPR000851">
    <property type="entry name" value="Ribosomal_uS5"/>
</dbReference>
<dbReference type="InterPro" id="IPR005712">
    <property type="entry name" value="Ribosomal_uS5_bac-type"/>
</dbReference>
<dbReference type="InterPro" id="IPR005324">
    <property type="entry name" value="Ribosomal_uS5_C"/>
</dbReference>
<dbReference type="InterPro" id="IPR013810">
    <property type="entry name" value="Ribosomal_uS5_N"/>
</dbReference>
<dbReference type="InterPro" id="IPR018192">
    <property type="entry name" value="Ribosomal_uS5_N_CS"/>
</dbReference>
<dbReference type="InterPro" id="IPR014721">
    <property type="entry name" value="Ribsml_uS5_D2-typ_fold_subgr"/>
</dbReference>
<dbReference type="NCBIfam" id="TIGR01021">
    <property type="entry name" value="rpsE_bact"/>
    <property type="match status" value="1"/>
</dbReference>
<dbReference type="PANTHER" id="PTHR48277">
    <property type="entry name" value="MITOCHONDRIAL RIBOSOMAL PROTEIN S5"/>
    <property type="match status" value="1"/>
</dbReference>
<dbReference type="PANTHER" id="PTHR48277:SF1">
    <property type="entry name" value="MITOCHONDRIAL RIBOSOMAL PROTEIN S5"/>
    <property type="match status" value="1"/>
</dbReference>
<dbReference type="Pfam" id="PF00333">
    <property type="entry name" value="Ribosomal_S5"/>
    <property type="match status" value="1"/>
</dbReference>
<dbReference type="Pfam" id="PF03719">
    <property type="entry name" value="Ribosomal_S5_C"/>
    <property type="match status" value="1"/>
</dbReference>
<dbReference type="SUPFAM" id="SSF54768">
    <property type="entry name" value="dsRNA-binding domain-like"/>
    <property type="match status" value="1"/>
</dbReference>
<dbReference type="SUPFAM" id="SSF54211">
    <property type="entry name" value="Ribosomal protein S5 domain 2-like"/>
    <property type="match status" value="1"/>
</dbReference>
<dbReference type="PROSITE" id="PS00585">
    <property type="entry name" value="RIBOSOMAL_S5"/>
    <property type="match status" value="1"/>
</dbReference>
<dbReference type="PROSITE" id="PS50881">
    <property type="entry name" value="S5_DSRBD"/>
    <property type="match status" value="1"/>
</dbReference>
<sequence>MAEERQQRGRDRDRNREEKVDDGMIEKLVAVNRVSKTVKGGRQFTFTALTVVGDGEGKVGFGYGKAREVPVAIQKSMEQARKNLVSVDLNNGTLWHTIKDGHGAARVFMQPASEGTGVIAGGAMRAVLEAVGVKNVLAKATGSRNPINLVRATVKGLSAAQSPARIAAKRGKKVEELNHG</sequence>
<organism>
    <name type="scientific">Stenotrophomonas maltophilia (strain R551-3)</name>
    <dbReference type="NCBI Taxonomy" id="391008"/>
    <lineage>
        <taxon>Bacteria</taxon>
        <taxon>Pseudomonadati</taxon>
        <taxon>Pseudomonadota</taxon>
        <taxon>Gammaproteobacteria</taxon>
        <taxon>Lysobacterales</taxon>
        <taxon>Lysobacteraceae</taxon>
        <taxon>Stenotrophomonas</taxon>
        <taxon>Stenotrophomonas maltophilia group</taxon>
    </lineage>
</organism>
<evidence type="ECO:0000255" key="1">
    <source>
        <dbReference type="HAMAP-Rule" id="MF_01307"/>
    </source>
</evidence>
<evidence type="ECO:0000305" key="2"/>
<keyword id="KW-0687">Ribonucleoprotein</keyword>
<keyword id="KW-0689">Ribosomal protein</keyword>
<keyword id="KW-0694">RNA-binding</keyword>
<keyword id="KW-0699">rRNA-binding</keyword>
<name>RS5_STRM5</name>
<gene>
    <name evidence="1" type="primary">rpsE</name>
    <name type="ordered locus">Smal_0773</name>
</gene>